<feature type="chain" id="PRO_0000247447" description="FERM domain-containing protein 5">
    <location>
        <begin position="1"/>
        <end position="517"/>
    </location>
</feature>
<feature type="domain" description="FERM" evidence="2">
    <location>
        <begin position="17"/>
        <end position="298"/>
    </location>
</feature>
<feature type="region of interest" description="Interaction with ROCK1" evidence="1">
    <location>
        <begin position="308"/>
        <end position="353"/>
    </location>
</feature>
<feature type="region of interest" description="Disordered" evidence="3">
    <location>
        <begin position="344"/>
        <end position="367"/>
    </location>
</feature>
<feature type="region of interest" description="Disordered" evidence="3">
    <location>
        <begin position="385"/>
        <end position="408"/>
    </location>
</feature>
<feature type="region of interest" description="Disordered" evidence="3">
    <location>
        <begin position="485"/>
        <end position="517"/>
    </location>
</feature>
<feature type="compositionally biased region" description="Polar residues" evidence="3">
    <location>
        <begin position="388"/>
        <end position="398"/>
    </location>
</feature>
<feature type="compositionally biased region" description="Low complexity" evidence="3">
    <location>
        <begin position="498"/>
        <end position="517"/>
    </location>
</feature>
<feature type="modified residue" description="Phosphoserine" evidence="6">
    <location>
        <position position="375"/>
    </location>
</feature>
<feature type="splice variant" id="VSP_019983" description="In isoform 2, isoform 3 and isoform 4." evidence="4 5">
    <location>
        <begin position="1"/>
        <end position="89"/>
    </location>
</feature>
<feature type="splice variant" id="VSP_019984" description="In isoform 2." evidence="5">
    <original>RVHLKGPQLQQQQWKGWGKSVPLD</original>
    <variation>VNKFVLSVLRLLLVTMGLLFVLLLLLIILTESDLDVAFFRDIRQTPEFEQFHYQYFCPLRRWFACKIRSVVSLLIDT</variation>
    <location>
        <begin position="494"/>
        <end position="517"/>
    </location>
</feature>
<feature type="splice variant" id="VSP_019985" description="In isoform 3." evidence="4">
    <original>RVHLKGPQLQQQQWKGWGKSVPLD</original>
    <variation>MQERDRSEEGIEKEQRPWKGPGSTKQDL</variation>
    <location>
        <begin position="494"/>
        <end position="517"/>
    </location>
</feature>
<feature type="splice variant" id="VSP_019986" description="In isoform 4." evidence="5">
    <original>RVHLKGPQLQQQQWKGWGKSVPLD</original>
    <variation>AMVCLQNPLSGEPAN</variation>
    <location>
        <begin position="494"/>
        <end position="517"/>
    </location>
</feature>
<reference key="1">
    <citation type="journal article" date="2005" name="Science">
        <title>The transcriptional landscape of the mammalian genome.</title>
        <authorList>
            <person name="Carninci P."/>
            <person name="Kasukawa T."/>
            <person name="Katayama S."/>
            <person name="Gough J."/>
            <person name="Frith M.C."/>
            <person name="Maeda N."/>
            <person name="Oyama R."/>
            <person name="Ravasi T."/>
            <person name="Lenhard B."/>
            <person name="Wells C."/>
            <person name="Kodzius R."/>
            <person name="Shimokawa K."/>
            <person name="Bajic V.B."/>
            <person name="Brenner S.E."/>
            <person name="Batalov S."/>
            <person name="Forrest A.R."/>
            <person name="Zavolan M."/>
            <person name="Davis M.J."/>
            <person name="Wilming L.G."/>
            <person name="Aidinis V."/>
            <person name="Allen J.E."/>
            <person name="Ambesi-Impiombato A."/>
            <person name="Apweiler R."/>
            <person name="Aturaliya R.N."/>
            <person name="Bailey T.L."/>
            <person name="Bansal M."/>
            <person name="Baxter L."/>
            <person name="Beisel K.W."/>
            <person name="Bersano T."/>
            <person name="Bono H."/>
            <person name="Chalk A.M."/>
            <person name="Chiu K.P."/>
            <person name="Choudhary V."/>
            <person name="Christoffels A."/>
            <person name="Clutterbuck D.R."/>
            <person name="Crowe M.L."/>
            <person name="Dalla E."/>
            <person name="Dalrymple B.P."/>
            <person name="de Bono B."/>
            <person name="Della Gatta G."/>
            <person name="di Bernardo D."/>
            <person name="Down T."/>
            <person name="Engstrom P."/>
            <person name="Fagiolini M."/>
            <person name="Faulkner G."/>
            <person name="Fletcher C.F."/>
            <person name="Fukushima T."/>
            <person name="Furuno M."/>
            <person name="Futaki S."/>
            <person name="Gariboldi M."/>
            <person name="Georgii-Hemming P."/>
            <person name="Gingeras T.R."/>
            <person name="Gojobori T."/>
            <person name="Green R.E."/>
            <person name="Gustincich S."/>
            <person name="Harbers M."/>
            <person name="Hayashi Y."/>
            <person name="Hensch T.K."/>
            <person name="Hirokawa N."/>
            <person name="Hill D."/>
            <person name="Huminiecki L."/>
            <person name="Iacono M."/>
            <person name="Ikeo K."/>
            <person name="Iwama A."/>
            <person name="Ishikawa T."/>
            <person name="Jakt M."/>
            <person name="Kanapin A."/>
            <person name="Katoh M."/>
            <person name="Kawasawa Y."/>
            <person name="Kelso J."/>
            <person name="Kitamura H."/>
            <person name="Kitano H."/>
            <person name="Kollias G."/>
            <person name="Krishnan S.P."/>
            <person name="Kruger A."/>
            <person name="Kummerfeld S.K."/>
            <person name="Kurochkin I.V."/>
            <person name="Lareau L.F."/>
            <person name="Lazarevic D."/>
            <person name="Lipovich L."/>
            <person name="Liu J."/>
            <person name="Liuni S."/>
            <person name="McWilliam S."/>
            <person name="Madan Babu M."/>
            <person name="Madera M."/>
            <person name="Marchionni L."/>
            <person name="Matsuda H."/>
            <person name="Matsuzawa S."/>
            <person name="Miki H."/>
            <person name="Mignone F."/>
            <person name="Miyake S."/>
            <person name="Morris K."/>
            <person name="Mottagui-Tabar S."/>
            <person name="Mulder N."/>
            <person name="Nakano N."/>
            <person name="Nakauchi H."/>
            <person name="Ng P."/>
            <person name="Nilsson R."/>
            <person name="Nishiguchi S."/>
            <person name="Nishikawa S."/>
            <person name="Nori F."/>
            <person name="Ohara O."/>
            <person name="Okazaki Y."/>
            <person name="Orlando V."/>
            <person name="Pang K.C."/>
            <person name="Pavan W.J."/>
            <person name="Pavesi G."/>
            <person name="Pesole G."/>
            <person name="Petrovsky N."/>
            <person name="Piazza S."/>
            <person name="Reed J."/>
            <person name="Reid J.F."/>
            <person name="Ring B.Z."/>
            <person name="Ringwald M."/>
            <person name="Rost B."/>
            <person name="Ruan Y."/>
            <person name="Salzberg S.L."/>
            <person name="Sandelin A."/>
            <person name="Schneider C."/>
            <person name="Schoenbach C."/>
            <person name="Sekiguchi K."/>
            <person name="Semple C.A."/>
            <person name="Seno S."/>
            <person name="Sessa L."/>
            <person name="Sheng Y."/>
            <person name="Shibata Y."/>
            <person name="Shimada H."/>
            <person name="Shimada K."/>
            <person name="Silva D."/>
            <person name="Sinclair B."/>
            <person name="Sperling S."/>
            <person name="Stupka E."/>
            <person name="Sugiura K."/>
            <person name="Sultana R."/>
            <person name="Takenaka Y."/>
            <person name="Taki K."/>
            <person name="Tammoja K."/>
            <person name="Tan S.L."/>
            <person name="Tang S."/>
            <person name="Taylor M.S."/>
            <person name="Tegner J."/>
            <person name="Teichmann S.A."/>
            <person name="Ueda H.R."/>
            <person name="van Nimwegen E."/>
            <person name="Verardo R."/>
            <person name="Wei C.L."/>
            <person name="Yagi K."/>
            <person name="Yamanishi H."/>
            <person name="Zabarovsky E."/>
            <person name="Zhu S."/>
            <person name="Zimmer A."/>
            <person name="Hide W."/>
            <person name="Bult C."/>
            <person name="Grimmond S.M."/>
            <person name="Teasdale R.D."/>
            <person name="Liu E.T."/>
            <person name="Brusic V."/>
            <person name="Quackenbush J."/>
            <person name="Wahlestedt C."/>
            <person name="Mattick J.S."/>
            <person name="Hume D.A."/>
            <person name="Kai C."/>
            <person name="Sasaki D."/>
            <person name="Tomaru Y."/>
            <person name="Fukuda S."/>
            <person name="Kanamori-Katayama M."/>
            <person name="Suzuki M."/>
            <person name="Aoki J."/>
            <person name="Arakawa T."/>
            <person name="Iida J."/>
            <person name="Imamura K."/>
            <person name="Itoh M."/>
            <person name="Kato T."/>
            <person name="Kawaji H."/>
            <person name="Kawagashira N."/>
            <person name="Kawashima T."/>
            <person name="Kojima M."/>
            <person name="Kondo S."/>
            <person name="Konno H."/>
            <person name="Nakano K."/>
            <person name="Ninomiya N."/>
            <person name="Nishio T."/>
            <person name="Okada M."/>
            <person name="Plessy C."/>
            <person name="Shibata K."/>
            <person name="Shiraki T."/>
            <person name="Suzuki S."/>
            <person name="Tagami M."/>
            <person name="Waki K."/>
            <person name="Watahiki A."/>
            <person name="Okamura-Oho Y."/>
            <person name="Suzuki H."/>
            <person name="Kawai J."/>
            <person name="Hayashizaki Y."/>
        </authorList>
    </citation>
    <scope>NUCLEOTIDE SEQUENCE [LARGE SCALE MRNA] (ISOFORMS 2 AND 4)</scope>
    <source>
        <strain>C57BL/6J</strain>
        <tissue>Thymus</tissue>
    </source>
</reference>
<reference key="2">
    <citation type="journal article" date="2009" name="PLoS Biol.">
        <title>Lineage-specific biology revealed by a finished genome assembly of the mouse.</title>
        <authorList>
            <person name="Church D.M."/>
            <person name="Goodstadt L."/>
            <person name="Hillier L.W."/>
            <person name="Zody M.C."/>
            <person name="Goldstein S."/>
            <person name="She X."/>
            <person name="Bult C.J."/>
            <person name="Agarwala R."/>
            <person name="Cherry J.L."/>
            <person name="DiCuccio M."/>
            <person name="Hlavina W."/>
            <person name="Kapustin Y."/>
            <person name="Meric P."/>
            <person name="Maglott D."/>
            <person name="Birtle Z."/>
            <person name="Marques A.C."/>
            <person name="Graves T."/>
            <person name="Zhou S."/>
            <person name="Teague B."/>
            <person name="Potamousis K."/>
            <person name="Churas C."/>
            <person name="Place M."/>
            <person name="Herschleb J."/>
            <person name="Runnheim R."/>
            <person name="Forrest D."/>
            <person name="Amos-Landgraf J."/>
            <person name="Schwartz D.C."/>
            <person name="Cheng Z."/>
            <person name="Lindblad-Toh K."/>
            <person name="Eichler E.E."/>
            <person name="Ponting C.P."/>
        </authorList>
    </citation>
    <scope>NUCLEOTIDE SEQUENCE [LARGE SCALE GENOMIC DNA]</scope>
    <source>
        <strain>C57BL/6J</strain>
    </source>
</reference>
<reference key="3">
    <citation type="journal article" date="2004" name="Genome Res.">
        <title>The status, quality, and expansion of the NIH full-length cDNA project: the Mammalian Gene Collection (MGC).</title>
        <authorList>
            <consortium name="The MGC Project Team"/>
        </authorList>
    </citation>
    <scope>NUCLEOTIDE SEQUENCE [LARGE SCALE MRNA] (ISOFORMS 1 AND 3)</scope>
    <source>
        <strain>C57BL/6J</strain>
        <tissue>Brain</tissue>
    </source>
</reference>
<reference key="4">
    <citation type="journal article" date="2010" name="Cell">
        <title>A tissue-specific atlas of mouse protein phosphorylation and expression.</title>
        <authorList>
            <person name="Huttlin E.L."/>
            <person name="Jedrychowski M.P."/>
            <person name="Elias J.E."/>
            <person name="Goswami T."/>
            <person name="Rad R."/>
            <person name="Beausoleil S.A."/>
            <person name="Villen J."/>
            <person name="Haas W."/>
            <person name="Sowa M.E."/>
            <person name="Gygi S.P."/>
        </authorList>
    </citation>
    <scope>PHOSPHORYLATION [LARGE SCALE ANALYSIS] AT SER-375</scope>
    <scope>IDENTIFICATION BY MASS SPECTROMETRY [LARGE SCALE ANALYSIS]</scope>
    <source>
        <tissue>Brain</tissue>
    </source>
</reference>
<comment type="function">
    <text evidence="1">May be involved in regulation of cell migration. May regulate cell-matrix interactions via its interaction with ITGB5 and modifying ITGB5 cytoplasmic tail interactions such as with FERMT2 and TLN1. May regulate ROCK1 kinase activity possibly involved in regulation of actin stress fiber formation.</text>
</comment>
<comment type="subunit">
    <text evidence="1">Interacts with CTNND1, ITGB5 (via cytoplasmic domain) and ROCK1.</text>
</comment>
<comment type="subcellular location">
    <subcellularLocation>
        <location evidence="1">Cell junction</location>
        <location evidence="1">Adherens junction</location>
    </subcellularLocation>
</comment>
<comment type="alternative products">
    <event type="alternative splicing"/>
    <isoform>
        <id>Q6P5H6-1</id>
        <name>1</name>
        <sequence type="displayed"/>
    </isoform>
    <isoform>
        <id>Q6P5H6-2</id>
        <name>2</name>
        <sequence type="described" ref="VSP_019983 VSP_019984"/>
    </isoform>
    <isoform>
        <id>Q6P5H6-3</id>
        <name>3</name>
        <sequence type="described" ref="VSP_019983 VSP_019985"/>
    </isoform>
    <isoform>
        <id>Q6P5H6-4</id>
        <name>4</name>
        <sequence type="described" ref="VSP_019983 VSP_019986"/>
    </isoform>
</comment>
<protein>
    <recommendedName>
        <fullName>FERM domain-containing protein 5</fullName>
    </recommendedName>
</protein>
<dbReference type="EMBL" id="AK030883">
    <property type="protein sequence ID" value="BAC27170.1"/>
    <property type="molecule type" value="mRNA"/>
</dbReference>
<dbReference type="EMBL" id="AL928678">
    <property type="status" value="NOT_ANNOTATED_CDS"/>
    <property type="molecule type" value="Genomic_DNA"/>
</dbReference>
<dbReference type="EMBL" id="BC057549">
    <property type="protein sequence ID" value="AAH57549.1"/>
    <property type="molecule type" value="mRNA"/>
</dbReference>
<dbReference type="EMBL" id="BC062889">
    <property type="protein sequence ID" value="AAH62889.1"/>
    <property type="molecule type" value="mRNA"/>
</dbReference>
<dbReference type="CCDS" id="CCDS16649.1">
    <molecule id="Q6P5H6-1"/>
</dbReference>
<dbReference type="RefSeq" id="NP_766261.2">
    <molecule id="Q6P5H6-1"/>
    <property type="nucleotide sequence ID" value="NM_172673.3"/>
</dbReference>
<dbReference type="SMR" id="Q6P5H6"/>
<dbReference type="BioGRID" id="230742">
    <property type="interactions" value="5"/>
</dbReference>
<dbReference type="FunCoup" id="Q6P5H6">
    <property type="interactions" value="102"/>
</dbReference>
<dbReference type="STRING" id="10090.ENSMUSP00000115136"/>
<dbReference type="GlyGen" id="Q6P5H6">
    <property type="glycosylation" value="2 sites"/>
</dbReference>
<dbReference type="iPTMnet" id="Q6P5H6"/>
<dbReference type="PhosphoSitePlus" id="Q6P5H6"/>
<dbReference type="PaxDb" id="10090-ENSMUSP00000115136"/>
<dbReference type="PeptideAtlas" id="Q6P5H6"/>
<dbReference type="ProteomicsDB" id="267521">
    <molecule id="Q6P5H6-1"/>
</dbReference>
<dbReference type="ProteomicsDB" id="267522">
    <molecule id="Q6P5H6-2"/>
</dbReference>
<dbReference type="ProteomicsDB" id="267523">
    <molecule id="Q6P5H6-3"/>
</dbReference>
<dbReference type="ProteomicsDB" id="267524">
    <molecule id="Q6P5H6-4"/>
</dbReference>
<dbReference type="Antibodypedia" id="2633">
    <property type="antibodies" value="89 antibodies from 16 providers"/>
</dbReference>
<dbReference type="DNASU" id="228564"/>
<dbReference type="Ensembl" id="ENSMUST00000121219.8">
    <molecule id="Q6P5H6-2"/>
    <property type="protein sequence ID" value="ENSMUSP00000113568.2"/>
    <property type="gene ID" value="ENSMUSG00000027238.18"/>
</dbReference>
<dbReference type="Ensembl" id="ENSMUST00000138157.8">
    <molecule id="Q6P5H6-1"/>
    <property type="protein sequence ID" value="ENSMUSP00000115136.2"/>
    <property type="gene ID" value="ENSMUSG00000027238.18"/>
</dbReference>
<dbReference type="GeneID" id="228564"/>
<dbReference type="KEGG" id="mmu:228564"/>
<dbReference type="UCSC" id="uc008lzk.1">
    <molecule id="Q6P5H6-1"/>
    <property type="organism name" value="mouse"/>
</dbReference>
<dbReference type="UCSC" id="uc008lzm.1">
    <molecule id="Q6P5H6-2"/>
    <property type="organism name" value="mouse"/>
</dbReference>
<dbReference type="AGR" id="MGI:2442557"/>
<dbReference type="CTD" id="84978"/>
<dbReference type="MGI" id="MGI:2442557">
    <property type="gene designation" value="Frmd5"/>
</dbReference>
<dbReference type="VEuPathDB" id="HostDB:ENSMUSG00000027238"/>
<dbReference type="eggNOG" id="KOG3530">
    <property type="taxonomic scope" value="Eukaryota"/>
</dbReference>
<dbReference type="GeneTree" id="ENSGT00940000156346"/>
<dbReference type="InParanoid" id="Q6P5H6"/>
<dbReference type="OMA" id="HFLQWNE"/>
<dbReference type="PhylomeDB" id="Q6P5H6"/>
<dbReference type="TreeFam" id="TF343477"/>
<dbReference type="BioGRID-ORCS" id="228564">
    <property type="hits" value="2 hits in 64 CRISPR screens"/>
</dbReference>
<dbReference type="ChiTaRS" id="Frmd5">
    <property type="organism name" value="mouse"/>
</dbReference>
<dbReference type="PRO" id="PR:Q6P5H6"/>
<dbReference type="Proteomes" id="UP000000589">
    <property type="component" value="Chromosome 2"/>
</dbReference>
<dbReference type="RNAct" id="Q6P5H6">
    <property type="molecule type" value="protein"/>
</dbReference>
<dbReference type="Bgee" id="ENSMUSG00000027238">
    <property type="expression patterns" value="Expressed in cardiac muscle of left ventricle and 188 other cell types or tissues"/>
</dbReference>
<dbReference type="ExpressionAtlas" id="Q6P5H6">
    <property type="expression patterns" value="baseline and differential"/>
</dbReference>
<dbReference type="GO" id="GO:0005912">
    <property type="term" value="C:adherens junction"/>
    <property type="evidence" value="ECO:0007669"/>
    <property type="project" value="UniProtKB-SubCell"/>
</dbReference>
<dbReference type="GO" id="GO:0005856">
    <property type="term" value="C:cytoskeleton"/>
    <property type="evidence" value="ECO:0007669"/>
    <property type="project" value="InterPro"/>
</dbReference>
<dbReference type="GO" id="GO:0008092">
    <property type="term" value="F:cytoskeletal protein binding"/>
    <property type="evidence" value="ECO:0007669"/>
    <property type="project" value="InterPro"/>
</dbReference>
<dbReference type="CDD" id="cd14473">
    <property type="entry name" value="FERM_B-lobe"/>
    <property type="match status" value="1"/>
</dbReference>
<dbReference type="CDD" id="cd13192">
    <property type="entry name" value="FERM_C_FRMD3_FRMD5"/>
    <property type="match status" value="1"/>
</dbReference>
<dbReference type="CDD" id="cd17102">
    <property type="entry name" value="FERM_F1_FRMD3"/>
    <property type="match status" value="1"/>
</dbReference>
<dbReference type="FunFam" id="3.10.20.90:FF:000458">
    <property type="entry name" value="Erythrocyte membrane protein band 4.1a"/>
    <property type="match status" value="1"/>
</dbReference>
<dbReference type="FunFam" id="2.30.29.30:FF:000043">
    <property type="entry name" value="FERM domain-containing protein 5"/>
    <property type="match status" value="1"/>
</dbReference>
<dbReference type="FunFam" id="1.20.80.10:FF:000006">
    <property type="entry name" value="FERM domain-containing protein 5 isoform X1"/>
    <property type="match status" value="1"/>
</dbReference>
<dbReference type="Gene3D" id="1.20.80.10">
    <property type="match status" value="1"/>
</dbReference>
<dbReference type="Gene3D" id="3.10.20.90">
    <property type="entry name" value="Phosphatidylinositol 3-kinase Catalytic Subunit, Chain A, domain 1"/>
    <property type="match status" value="1"/>
</dbReference>
<dbReference type="Gene3D" id="2.30.29.30">
    <property type="entry name" value="Pleckstrin-homology domain (PH domain)/Phosphotyrosine-binding domain (PTB)"/>
    <property type="match status" value="1"/>
</dbReference>
<dbReference type="InterPro" id="IPR019749">
    <property type="entry name" value="Band_41_domain"/>
</dbReference>
<dbReference type="InterPro" id="IPR000798">
    <property type="entry name" value="Ez/rad/moesin-like"/>
</dbReference>
<dbReference type="InterPro" id="IPR014847">
    <property type="entry name" value="FA"/>
</dbReference>
<dbReference type="InterPro" id="IPR014352">
    <property type="entry name" value="FERM/acyl-CoA-bd_prot_sf"/>
</dbReference>
<dbReference type="InterPro" id="IPR035963">
    <property type="entry name" value="FERM_2"/>
</dbReference>
<dbReference type="InterPro" id="IPR019748">
    <property type="entry name" value="FERM_central"/>
</dbReference>
<dbReference type="InterPro" id="IPR019747">
    <property type="entry name" value="FERM_CS"/>
</dbReference>
<dbReference type="InterPro" id="IPR000299">
    <property type="entry name" value="FERM_domain"/>
</dbReference>
<dbReference type="InterPro" id="IPR018979">
    <property type="entry name" value="FERM_N"/>
</dbReference>
<dbReference type="InterPro" id="IPR018980">
    <property type="entry name" value="FERM_PH-like_C"/>
</dbReference>
<dbReference type="InterPro" id="IPR011993">
    <property type="entry name" value="PH-like_dom_sf"/>
</dbReference>
<dbReference type="InterPro" id="IPR029071">
    <property type="entry name" value="Ubiquitin-like_domsf"/>
</dbReference>
<dbReference type="PANTHER" id="PTHR23280">
    <property type="entry name" value="4.1 G PROTEIN"/>
    <property type="match status" value="1"/>
</dbReference>
<dbReference type="PANTHER" id="PTHR23280:SF5">
    <property type="entry name" value="FERM DOMAIN-CONTAINING PROTEIN 5"/>
    <property type="match status" value="1"/>
</dbReference>
<dbReference type="Pfam" id="PF08736">
    <property type="entry name" value="FA"/>
    <property type="match status" value="1"/>
</dbReference>
<dbReference type="Pfam" id="PF09380">
    <property type="entry name" value="FERM_C"/>
    <property type="match status" value="1"/>
</dbReference>
<dbReference type="Pfam" id="PF00373">
    <property type="entry name" value="FERM_M"/>
    <property type="match status" value="1"/>
</dbReference>
<dbReference type="Pfam" id="PF09379">
    <property type="entry name" value="FERM_N"/>
    <property type="match status" value="1"/>
</dbReference>
<dbReference type="PRINTS" id="PR00935">
    <property type="entry name" value="BAND41"/>
</dbReference>
<dbReference type="PRINTS" id="PR00661">
    <property type="entry name" value="ERMFAMILY"/>
</dbReference>
<dbReference type="SMART" id="SM00295">
    <property type="entry name" value="B41"/>
    <property type="match status" value="1"/>
</dbReference>
<dbReference type="SMART" id="SM01195">
    <property type="entry name" value="FA"/>
    <property type="match status" value="1"/>
</dbReference>
<dbReference type="SMART" id="SM01196">
    <property type="entry name" value="FERM_C"/>
    <property type="match status" value="1"/>
</dbReference>
<dbReference type="SUPFAM" id="SSF50729">
    <property type="entry name" value="PH domain-like"/>
    <property type="match status" value="1"/>
</dbReference>
<dbReference type="SUPFAM" id="SSF47031">
    <property type="entry name" value="Second domain of FERM"/>
    <property type="match status" value="1"/>
</dbReference>
<dbReference type="SUPFAM" id="SSF54236">
    <property type="entry name" value="Ubiquitin-like"/>
    <property type="match status" value="1"/>
</dbReference>
<dbReference type="PROSITE" id="PS00660">
    <property type="entry name" value="FERM_1"/>
    <property type="match status" value="1"/>
</dbReference>
<dbReference type="PROSITE" id="PS50057">
    <property type="entry name" value="FERM_3"/>
    <property type="match status" value="1"/>
</dbReference>
<gene>
    <name type="primary">Frmd5</name>
</gene>
<accession>Q6P5H6</accession>
<accession>B0R0I9</accession>
<accession>Q6PFH6</accession>
<accession>Q8C0K0</accession>
<organism>
    <name type="scientific">Mus musculus</name>
    <name type="common">Mouse</name>
    <dbReference type="NCBI Taxonomy" id="10090"/>
    <lineage>
        <taxon>Eukaryota</taxon>
        <taxon>Metazoa</taxon>
        <taxon>Chordata</taxon>
        <taxon>Craniata</taxon>
        <taxon>Vertebrata</taxon>
        <taxon>Euteleostomi</taxon>
        <taxon>Mammalia</taxon>
        <taxon>Eutheria</taxon>
        <taxon>Euarchontoglires</taxon>
        <taxon>Glires</taxon>
        <taxon>Rodentia</taxon>
        <taxon>Myomorpha</taxon>
        <taxon>Muroidea</taxon>
        <taxon>Muridae</taxon>
        <taxon>Murinae</taxon>
        <taxon>Mus</taxon>
        <taxon>Mus</taxon>
    </lineage>
</organism>
<proteinExistence type="evidence at protein level"/>
<keyword id="KW-0025">Alternative splicing</keyword>
<keyword id="KW-0965">Cell junction</keyword>
<keyword id="KW-0597">Phosphoprotein</keyword>
<keyword id="KW-1185">Reference proteome</keyword>
<name>FRMD5_MOUSE</name>
<evidence type="ECO:0000250" key="1">
    <source>
        <dbReference type="UniProtKB" id="Q7Z6J6"/>
    </source>
</evidence>
<evidence type="ECO:0000255" key="2">
    <source>
        <dbReference type="PROSITE-ProRule" id="PRU00084"/>
    </source>
</evidence>
<evidence type="ECO:0000256" key="3">
    <source>
        <dbReference type="SAM" id="MobiDB-lite"/>
    </source>
</evidence>
<evidence type="ECO:0000303" key="4">
    <source>
    </source>
</evidence>
<evidence type="ECO:0000303" key="5">
    <source>
    </source>
</evidence>
<evidence type="ECO:0007744" key="6">
    <source>
    </source>
</evidence>
<sequence>MLSRLMSGSSRSLEREYSCTVRLLDDSEYTCTIQRDAKGQYLFDLLCHHLNLLEKDYFGIRFVDPDKQRHWLEFTKSVVKQLRSQPPFTMCFRVKFYPADPAALKEEITRYLVFLQIKRDLYHGRLLCKTSDAALLAAYILQAEIGDYDPGKHPEGYSSKFQFFPKHSEKLEKKIAEIHKTELSGQTPATSELNFLRKAQTLETYGVDPHPCKDVSGNAAFLAFTPFGFVVLQGNKRVHFIKWNEVTKLKFEGKTFYLYVSQKEEKKIILTYFAPTPEACKHLWKCGIENQAFYKLEKSSQVRTVSSSNLFFKGSRFRYSGRVAKEVMESSAKIKREPPEIHRAGMVPSRSCPSITHGPRLSSVPRTRRRAVHISIMEGLESLRDSAHSTPVRSSSHGDTFLPHVRSSRADSNERVAVIADEAYSPADSVLPTPVAEHSLELMLLSRQINGATCSIEEEKESEASTPTATEAEALGGELRALCQGHGGSEQEQRVHLKGPQLQQQQWKGWGKSVPLD</sequence>